<name>CLPX_VIBVY</name>
<gene>
    <name evidence="1" type="primary">clpX</name>
    <name type="ordered locus">VV1105</name>
</gene>
<evidence type="ECO:0000255" key="1">
    <source>
        <dbReference type="HAMAP-Rule" id="MF_00175"/>
    </source>
</evidence>
<evidence type="ECO:0000255" key="2">
    <source>
        <dbReference type="PROSITE-ProRule" id="PRU01250"/>
    </source>
</evidence>
<proteinExistence type="inferred from homology"/>
<reference key="1">
    <citation type="journal article" date="2003" name="Genome Res.">
        <title>Comparative genome analysis of Vibrio vulnificus, a marine pathogen.</title>
        <authorList>
            <person name="Chen C.-Y."/>
            <person name="Wu K.-M."/>
            <person name="Chang Y.-C."/>
            <person name="Chang C.-H."/>
            <person name="Tsai H.-C."/>
            <person name="Liao T.-L."/>
            <person name="Liu Y.-M."/>
            <person name="Chen H.-J."/>
            <person name="Shen A.B.-T."/>
            <person name="Li J.-C."/>
            <person name="Su T.-L."/>
            <person name="Shao C.-P."/>
            <person name="Lee C.-T."/>
            <person name="Hor L.-I."/>
            <person name="Tsai S.-F."/>
        </authorList>
    </citation>
    <scope>NUCLEOTIDE SEQUENCE [LARGE SCALE GENOMIC DNA]</scope>
    <source>
        <strain>YJ016</strain>
    </source>
</reference>
<feature type="chain" id="PRO_0000160454" description="ATP-dependent Clp protease ATP-binding subunit ClpX">
    <location>
        <begin position="1"/>
        <end position="426"/>
    </location>
</feature>
<feature type="domain" description="ClpX-type ZB" evidence="2">
    <location>
        <begin position="4"/>
        <end position="57"/>
    </location>
</feature>
<feature type="binding site" evidence="2">
    <location>
        <position position="16"/>
    </location>
    <ligand>
        <name>Zn(2+)</name>
        <dbReference type="ChEBI" id="CHEBI:29105"/>
    </ligand>
</feature>
<feature type="binding site" evidence="2">
    <location>
        <position position="19"/>
    </location>
    <ligand>
        <name>Zn(2+)</name>
        <dbReference type="ChEBI" id="CHEBI:29105"/>
    </ligand>
</feature>
<feature type="binding site" evidence="2">
    <location>
        <position position="38"/>
    </location>
    <ligand>
        <name>Zn(2+)</name>
        <dbReference type="ChEBI" id="CHEBI:29105"/>
    </ligand>
</feature>
<feature type="binding site" evidence="2">
    <location>
        <position position="41"/>
    </location>
    <ligand>
        <name>Zn(2+)</name>
        <dbReference type="ChEBI" id="CHEBI:29105"/>
    </ligand>
</feature>
<feature type="binding site" evidence="1">
    <location>
        <begin position="122"/>
        <end position="129"/>
    </location>
    <ligand>
        <name>ATP</name>
        <dbReference type="ChEBI" id="CHEBI:30616"/>
    </ligand>
</feature>
<sequence>MTDKSKESGSGKLLYCSFCGKSQHEVRKLIAGPSVYICDECVDLCNDIIREEIKDVLPKRESEALPTPREIRAHLDDYVIGQDHAKKVLAVAVYNHYKRLRNGDTTSDGVELGKSNILLIGPTGSGKTLLAETLARFLDVPFTMADATTLTEAGYVGEDVENIIQKLLQKCDYDVAKAERGIVYIDEIDKISRKAENPSITRDVSGEGVQQALLKLVEGTIASVPPQGGRKHPQQEFLQVDTSKILFICGGAFAGLDKVIEQRVATGTGIGFGAEVRSKDESKTVGELFTQVEPEDLVKYGLIPEFIGRLPVTASLTELDEEALIQILCQPKNALTKQYAALFELEGADLEFREDALKAIAKKAMERKTGARGLRSILEGVLLETMYELPSMDDVSKVVIDESVINGESEPLLIYTNSDSQAAGAE</sequence>
<organism>
    <name type="scientific">Vibrio vulnificus (strain YJ016)</name>
    <dbReference type="NCBI Taxonomy" id="196600"/>
    <lineage>
        <taxon>Bacteria</taxon>
        <taxon>Pseudomonadati</taxon>
        <taxon>Pseudomonadota</taxon>
        <taxon>Gammaproteobacteria</taxon>
        <taxon>Vibrionales</taxon>
        <taxon>Vibrionaceae</taxon>
        <taxon>Vibrio</taxon>
    </lineage>
</organism>
<keyword id="KW-0067">ATP-binding</keyword>
<keyword id="KW-0143">Chaperone</keyword>
<keyword id="KW-0479">Metal-binding</keyword>
<keyword id="KW-0547">Nucleotide-binding</keyword>
<keyword id="KW-0862">Zinc</keyword>
<protein>
    <recommendedName>
        <fullName evidence="1">ATP-dependent Clp protease ATP-binding subunit ClpX</fullName>
    </recommendedName>
</protein>
<comment type="function">
    <text evidence="1">ATP-dependent specificity component of the Clp protease. It directs the protease to specific substrates. Can perform chaperone functions in the absence of ClpP.</text>
</comment>
<comment type="subunit">
    <text evidence="1">Component of the ClpX-ClpP complex. Forms a hexameric ring that, in the presence of ATP, binds to fourteen ClpP subunits assembled into a disk-like structure with a central cavity, resembling the structure of eukaryotic proteasomes.</text>
</comment>
<comment type="similarity">
    <text evidence="1">Belongs to the ClpX chaperone family.</text>
</comment>
<accession>Q7MMG6</accession>
<dbReference type="EMBL" id="BA000037">
    <property type="protein sequence ID" value="BAC93869.1"/>
    <property type="molecule type" value="Genomic_DNA"/>
</dbReference>
<dbReference type="RefSeq" id="WP_011078148.1">
    <property type="nucleotide sequence ID" value="NC_005139.1"/>
</dbReference>
<dbReference type="SMR" id="Q7MMG6"/>
<dbReference type="STRING" id="672.VV93_v1c10260"/>
<dbReference type="KEGG" id="vvy:VV1105"/>
<dbReference type="eggNOG" id="COG1219">
    <property type="taxonomic scope" value="Bacteria"/>
</dbReference>
<dbReference type="HOGENOM" id="CLU_014218_8_2_6"/>
<dbReference type="Proteomes" id="UP000002675">
    <property type="component" value="Chromosome I"/>
</dbReference>
<dbReference type="GO" id="GO:0009376">
    <property type="term" value="C:HslUV protease complex"/>
    <property type="evidence" value="ECO:0007669"/>
    <property type="project" value="TreeGrafter"/>
</dbReference>
<dbReference type="GO" id="GO:0005524">
    <property type="term" value="F:ATP binding"/>
    <property type="evidence" value="ECO:0007669"/>
    <property type="project" value="UniProtKB-UniRule"/>
</dbReference>
<dbReference type="GO" id="GO:0016887">
    <property type="term" value="F:ATP hydrolysis activity"/>
    <property type="evidence" value="ECO:0007669"/>
    <property type="project" value="InterPro"/>
</dbReference>
<dbReference type="GO" id="GO:0140662">
    <property type="term" value="F:ATP-dependent protein folding chaperone"/>
    <property type="evidence" value="ECO:0007669"/>
    <property type="project" value="InterPro"/>
</dbReference>
<dbReference type="GO" id="GO:0046983">
    <property type="term" value="F:protein dimerization activity"/>
    <property type="evidence" value="ECO:0007669"/>
    <property type="project" value="InterPro"/>
</dbReference>
<dbReference type="GO" id="GO:0051082">
    <property type="term" value="F:unfolded protein binding"/>
    <property type="evidence" value="ECO:0007669"/>
    <property type="project" value="UniProtKB-UniRule"/>
</dbReference>
<dbReference type="GO" id="GO:0008270">
    <property type="term" value="F:zinc ion binding"/>
    <property type="evidence" value="ECO:0007669"/>
    <property type="project" value="InterPro"/>
</dbReference>
<dbReference type="GO" id="GO:0051301">
    <property type="term" value="P:cell division"/>
    <property type="evidence" value="ECO:0007669"/>
    <property type="project" value="TreeGrafter"/>
</dbReference>
<dbReference type="GO" id="GO:0051603">
    <property type="term" value="P:proteolysis involved in protein catabolic process"/>
    <property type="evidence" value="ECO:0007669"/>
    <property type="project" value="TreeGrafter"/>
</dbReference>
<dbReference type="CDD" id="cd19497">
    <property type="entry name" value="RecA-like_ClpX"/>
    <property type="match status" value="1"/>
</dbReference>
<dbReference type="FunFam" id="1.10.8.60:FF:000002">
    <property type="entry name" value="ATP-dependent Clp protease ATP-binding subunit ClpX"/>
    <property type="match status" value="1"/>
</dbReference>
<dbReference type="FunFam" id="3.40.50.300:FF:000005">
    <property type="entry name" value="ATP-dependent Clp protease ATP-binding subunit ClpX"/>
    <property type="match status" value="1"/>
</dbReference>
<dbReference type="Gene3D" id="1.10.8.60">
    <property type="match status" value="1"/>
</dbReference>
<dbReference type="Gene3D" id="6.20.220.10">
    <property type="entry name" value="ClpX chaperone, C4-type zinc finger domain"/>
    <property type="match status" value="1"/>
</dbReference>
<dbReference type="Gene3D" id="3.40.50.300">
    <property type="entry name" value="P-loop containing nucleotide triphosphate hydrolases"/>
    <property type="match status" value="1"/>
</dbReference>
<dbReference type="HAMAP" id="MF_00175">
    <property type="entry name" value="ClpX"/>
    <property type="match status" value="1"/>
</dbReference>
<dbReference type="InterPro" id="IPR003593">
    <property type="entry name" value="AAA+_ATPase"/>
</dbReference>
<dbReference type="InterPro" id="IPR050052">
    <property type="entry name" value="ATP-dep_Clp_protease_ClpX"/>
</dbReference>
<dbReference type="InterPro" id="IPR003959">
    <property type="entry name" value="ATPase_AAA_core"/>
</dbReference>
<dbReference type="InterPro" id="IPR019489">
    <property type="entry name" value="Clp_ATPase_C"/>
</dbReference>
<dbReference type="InterPro" id="IPR004487">
    <property type="entry name" value="Clp_protease_ATP-bd_su_ClpX"/>
</dbReference>
<dbReference type="InterPro" id="IPR046425">
    <property type="entry name" value="ClpX_bact"/>
</dbReference>
<dbReference type="InterPro" id="IPR027417">
    <property type="entry name" value="P-loop_NTPase"/>
</dbReference>
<dbReference type="InterPro" id="IPR010603">
    <property type="entry name" value="Znf_CppX_C4"/>
</dbReference>
<dbReference type="InterPro" id="IPR038366">
    <property type="entry name" value="Znf_CppX_C4_sf"/>
</dbReference>
<dbReference type="NCBIfam" id="TIGR00382">
    <property type="entry name" value="clpX"/>
    <property type="match status" value="1"/>
</dbReference>
<dbReference type="NCBIfam" id="NF003745">
    <property type="entry name" value="PRK05342.1"/>
    <property type="match status" value="1"/>
</dbReference>
<dbReference type="PANTHER" id="PTHR48102:SF7">
    <property type="entry name" value="ATP-DEPENDENT CLP PROTEASE ATP-BINDING SUBUNIT CLPX-LIKE, MITOCHONDRIAL"/>
    <property type="match status" value="1"/>
</dbReference>
<dbReference type="PANTHER" id="PTHR48102">
    <property type="entry name" value="ATP-DEPENDENT CLP PROTEASE ATP-BINDING SUBUNIT CLPX-LIKE, MITOCHONDRIAL-RELATED"/>
    <property type="match status" value="1"/>
</dbReference>
<dbReference type="Pfam" id="PF07724">
    <property type="entry name" value="AAA_2"/>
    <property type="match status" value="1"/>
</dbReference>
<dbReference type="Pfam" id="PF10431">
    <property type="entry name" value="ClpB_D2-small"/>
    <property type="match status" value="1"/>
</dbReference>
<dbReference type="Pfam" id="PF06689">
    <property type="entry name" value="zf-C4_ClpX"/>
    <property type="match status" value="1"/>
</dbReference>
<dbReference type="SMART" id="SM00382">
    <property type="entry name" value="AAA"/>
    <property type="match status" value="1"/>
</dbReference>
<dbReference type="SMART" id="SM01086">
    <property type="entry name" value="ClpB_D2-small"/>
    <property type="match status" value="1"/>
</dbReference>
<dbReference type="SMART" id="SM00994">
    <property type="entry name" value="zf-C4_ClpX"/>
    <property type="match status" value="1"/>
</dbReference>
<dbReference type="SUPFAM" id="SSF57716">
    <property type="entry name" value="Glucocorticoid receptor-like (DNA-binding domain)"/>
    <property type="match status" value="1"/>
</dbReference>
<dbReference type="SUPFAM" id="SSF52540">
    <property type="entry name" value="P-loop containing nucleoside triphosphate hydrolases"/>
    <property type="match status" value="1"/>
</dbReference>
<dbReference type="PROSITE" id="PS51902">
    <property type="entry name" value="CLPX_ZB"/>
    <property type="match status" value="1"/>
</dbReference>